<feature type="chain" id="PRO_0000149700" description="Large ribosomal subunit protein eL21">
    <location>
        <begin position="1"/>
        <end position="98"/>
    </location>
</feature>
<feature type="region of interest" description="Disordered" evidence="2">
    <location>
        <begin position="1"/>
        <end position="27"/>
    </location>
</feature>
<feature type="compositionally biased region" description="Basic residues" evidence="2">
    <location>
        <begin position="1"/>
        <end position="24"/>
    </location>
</feature>
<protein>
    <recommendedName>
        <fullName evidence="1">Large ribosomal subunit protein eL21</fullName>
    </recommendedName>
    <alternativeName>
        <fullName evidence="4">50S ribosomal protein L21e</fullName>
    </alternativeName>
</protein>
<sequence>MVKKAHSFRRKTRGKLSKHPRRRGLPPLTRFLQEFEVGQKVHIVIEPSYHKGMPDPRFHGRTGTVVGKRGDAYIVQITDGGKVKTFFIHPVHLRPQKG</sequence>
<reference key="1">
    <citation type="journal article" date="2005" name="Genome Res.">
        <title>Complete genome sequence of the hyperthermophilic archaeon Thermococcus kodakaraensis KOD1 and comparison with Pyrococcus genomes.</title>
        <authorList>
            <person name="Fukui T."/>
            <person name="Atomi H."/>
            <person name="Kanai T."/>
            <person name="Matsumi R."/>
            <person name="Fujiwara S."/>
            <person name="Imanaka T."/>
        </authorList>
    </citation>
    <scope>NUCLEOTIDE SEQUENCE [LARGE SCALE GENOMIC DNA]</scope>
    <source>
        <strain>ATCC BAA-918 / JCM 12380 / KOD1</strain>
    </source>
</reference>
<reference evidence="5 6 7" key="2">
    <citation type="journal article" date="2020" name="Nature">
        <title>Dynamic RNA acetylation revealed by quantitative cross-evolutionary mapping.</title>
        <authorList>
            <person name="Sas-Chen A."/>
            <person name="Thomas J.M."/>
            <person name="Matzov D."/>
            <person name="Taoka M."/>
            <person name="Nance K.D."/>
            <person name="Nir R."/>
            <person name="Bryson K.M."/>
            <person name="Shachar R."/>
            <person name="Liman G.L.S."/>
            <person name="Burkhart B.W."/>
            <person name="Gamage S.T."/>
            <person name="Nobe Y."/>
            <person name="Briney C.A."/>
            <person name="Levy M.J."/>
            <person name="Fuchs R.T."/>
            <person name="Robb G.B."/>
            <person name="Hartmann J."/>
            <person name="Sharma S."/>
            <person name="Lin Q."/>
            <person name="Florens L."/>
            <person name="Washburn M.P."/>
            <person name="Isobe T."/>
            <person name="Santangelo T.J."/>
            <person name="Shalev-Benami M."/>
            <person name="Meier J.L."/>
            <person name="Schwartz S."/>
        </authorList>
    </citation>
    <scope>STRUCTURE BY ELECTRON MICROSCOPY (2.55 ANGSTROMS) IN 70S RIBOSOME</scope>
    <scope>SUBUNIT</scope>
    <source>
        <strain>ATCC BAA-918 / TS559</strain>
    </source>
</reference>
<comment type="subunit">
    <text evidence="3">Part of the 50S ribosomal subunit.</text>
</comment>
<comment type="similarity">
    <text evidence="1">Belongs to the eukaryotic ribosomal protein eL21 family.</text>
</comment>
<organism>
    <name type="scientific">Thermococcus kodakarensis (strain ATCC BAA-918 / JCM 12380 / KOD1)</name>
    <name type="common">Pyrococcus kodakaraensis (strain KOD1)</name>
    <dbReference type="NCBI Taxonomy" id="69014"/>
    <lineage>
        <taxon>Archaea</taxon>
        <taxon>Methanobacteriati</taxon>
        <taxon>Methanobacteriota</taxon>
        <taxon>Thermococci</taxon>
        <taxon>Thermococcales</taxon>
        <taxon>Thermococcaceae</taxon>
        <taxon>Thermococcus</taxon>
    </lineage>
</organism>
<gene>
    <name evidence="1" type="primary">rpl21e</name>
    <name type="ordered locus">TK0902</name>
</gene>
<proteinExistence type="evidence at protein level"/>
<dbReference type="EMBL" id="AP006878">
    <property type="protein sequence ID" value="BAD85091.1"/>
    <property type="molecule type" value="Genomic_DNA"/>
</dbReference>
<dbReference type="RefSeq" id="WP_011249853.1">
    <property type="nucleotide sequence ID" value="NC_006624.1"/>
</dbReference>
<dbReference type="PDB" id="6SKF">
    <property type="method" value="EM"/>
    <property type="resolution" value="2.95 A"/>
    <property type="chains" value="BU=1-98"/>
</dbReference>
<dbReference type="PDB" id="6SKG">
    <property type="method" value="EM"/>
    <property type="resolution" value="2.65 A"/>
    <property type="chains" value="BU=1-98"/>
</dbReference>
<dbReference type="PDB" id="6TH6">
    <property type="method" value="EM"/>
    <property type="resolution" value="2.55 A"/>
    <property type="chains" value="BU=1-98"/>
</dbReference>
<dbReference type="PDBsum" id="6SKF"/>
<dbReference type="PDBsum" id="6SKG"/>
<dbReference type="PDBsum" id="6TH6"/>
<dbReference type="EMDB" id="EMD-10223"/>
<dbReference type="EMDB" id="EMD-10224"/>
<dbReference type="EMDB" id="EMD-10503"/>
<dbReference type="SMR" id="Q5JI51"/>
<dbReference type="FunCoup" id="Q5JI51">
    <property type="interactions" value="125"/>
</dbReference>
<dbReference type="STRING" id="69014.TK0902"/>
<dbReference type="EnsemblBacteria" id="BAD85091">
    <property type="protein sequence ID" value="BAD85091"/>
    <property type="gene ID" value="TK0902"/>
</dbReference>
<dbReference type="GeneID" id="78447417"/>
<dbReference type="KEGG" id="tko:TK0902"/>
<dbReference type="PATRIC" id="fig|69014.16.peg.881"/>
<dbReference type="eggNOG" id="arCOG04129">
    <property type="taxonomic scope" value="Archaea"/>
</dbReference>
<dbReference type="HOGENOM" id="CLU_103610_1_1_2"/>
<dbReference type="InParanoid" id="Q5JI51"/>
<dbReference type="OrthoDB" id="6295at2157"/>
<dbReference type="PhylomeDB" id="Q5JI51"/>
<dbReference type="Proteomes" id="UP000000536">
    <property type="component" value="Chromosome"/>
</dbReference>
<dbReference type="GO" id="GO:0022625">
    <property type="term" value="C:cytosolic large ribosomal subunit"/>
    <property type="evidence" value="ECO:0000318"/>
    <property type="project" value="GO_Central"/>
</dbReference>
<dbReference type="GO" id="GO:0003735">
    <property type="term" value="F:structural constituent of ribosome"/>
    <property type="evidence" value="ECO:0000318"/>
    <property type="project" value="GO_Central"/>
</dbReference>
<dbReference type="GO" id="GO:0006412">
    <property type="term" value="P:translation"/>
    <property type="evidence" value="ECO:0007669"/>
    <property type="project" value="UniProtKB-UniRule"/>
</dbReference>
<dbReference type="FunFam" id="2.30.30.70:FF:000001">
    <property type="entry name" value="60S ribosomal protein L21"/>
    <property type="match status" value="1"/>
</dbReference>
<dbReference type="Gene3D" id="2.30.30.70">
    <property type="entry name" value="Ribosomal protein L21"/>
    <property type="match status" value="1"/>
</dbReference>
<dbReference type="HAMAP" id="MF_00369">
    <property type="entry name" value="Ribosomal_eL21"/>
    <property type="match status" value="1"/>
</dbReference>
<dbReference type="InterPro" id="IPR001147">
    <property type="entry name" value="Ribosomal_eL21"/>
</dbReference>
<dbReference type="InterPro" id="IPR022856">
    <property type="entry name" value="Ribosomal_eL21_arc"/>
</dbReference>
<dbReference type="InterPro" id="IPR018259">
    <property type="entry name" value="Ribosomal_eL21_CS"/>
</dbReference>
<dbReference type="InterPro" id="IPR036948">
    <property type="entry name" value="Ribosomal_eL21_sf"/>
</dbReference>
<dbReference type="InterPro" id="IPR008991">
    <property type="entry name" value="Translation_prot_SH3-like_sf"/>
</dbReference>
<dbReference type="NCBIfam" id="NF003303">
    <property type="entry name" value="PRK04306.1"/>
    <property type="match status" value="1"/>
</dbReference>
<dbReference type="PANTHER" id="PTHR20981">
    <property type="entry name" value="60S RIBOSOMAL PROTEIN L21"/>
    <property type="match status" value="1"/>
</dbReference>
<dbReference type="Pfam" id="PF01157">
    <property type="entry name" value="Ribosomal_L21e"/>
    <property type="match status" value="1"/>
</dbReference>
<dbReference type="SUPFAM" id="SSF50104">
    <property type="entry name" value="Translation proteins SH3-like domain"/>
    <property type="match status" value="1"/>
</dbReference>
<dbReference type="PROSITE" id="PS01171">
    <property type="entry name" value="RIBOSOMAL_L21E"/>
    <property type="match status" value="1"/>
</dbReference>
<keyword id="KW-0002">3D-structure</keyword>
<keyword id="KW-1185">Reference proteome</keyword>
<keyword id="KW-0687">Ribonucleoprotein</keyword>
<keyword id="KW-0689">Ribosomal protein</keyword>
<name>RL21_THEKO</name>
<evidence type="ECO:0000255" key="1">
    <source>
        <dbReference type="HAMAP-Rule" id="MF_00369"/>
    </source>
</evidence>
<evidence type="ECO:0000256" key="2">
    <source>
        <dbReference type="SAM" id="MobiDB-lite"/>
    </source>
</evidence>
<evidence type="ECO:0000269" key="3">
    <source>
    </source>
</evidence>
<evidence type="ECO:0000305" key="4"/>
<evidence type="ECO:0007744" key="5">
    <source>
        <dbReference type="PDB" id="6SKF"/>
    </source>
</evidence>
<evidence type="ECO:0007744" key="6">
    <source>
        <dbReference type="PDB" id="6SKG"/>
    </source>
</evidence>
<evidence type="ECO:0007744" key="7">
    <source>
        <dbReference type="PDB" id="6TH6"/>
    </source>
</evidence>
<accession>Q5JI51</accession>